<reference key="1">
    <citation type="journal article" date="2004" name="Nucleic Acids Res.">
        <title>Genome sequence of Symbiobacterium thermophilum, an uncultivable bacterium that depends on microbial commensalism.</title>
        <authorList>
            <person name="Ueda K."/>
            <person name="Yamashita A."/>
            <person name="Ishikawa J."/>
            <person name="Shimada M."/>
            <person name="Watsuji T."/>
            <person name="Morimura K."/>
            <person name="Ikeda H."/>
            <person name="Hattori M."/>
            <person name="Beppu T."/>
        </authorList>
    </citation>
    <scope>NUCLEOTIDE SEQUENCE [LARGE SCALE GENOMIC DNA]</scope>
    <source>
        <strain>DSM 24528 / JCM 14929 / IAM 14863 / T</strain>
    </source>
</reference>
<name>MUTS2_SYMTH</name>
<comment type="function">
    <text evidence="1">Endonuclease that is involved in the suppression of homologous recombination and thus may have a key role in the control of bacterial genetic diversity.</text>
</comment>
<comment type="function">
    <text evidence="1">Acts as a ribosome collision sensor, splitting the ribosome into its 2 subunits. Detects stalled/collided 70S ribosomes which it binds and splits by an ATP-hydrolysis driven conformational change. Acts upstream of the ribosome quality control system (RQC), a ribosome-associated complex that mediates the extraction of incompletely synthesized nascent chains from stalled ribosomes and their subsequent degradation. Probably generates substrates for RQC.</text>
</comment>
<comment type="subunit">
    <text evidence="1">Homodimer. Binds to stalled ribosomes, contacting rRNA.</text>
</comment>
<comment type="similarity">
    <text evidence="1">Belongs to the DNA mismatch repair MutS family. MutS2 subfamily.</text>
</comment>
<gene>
    <name evidence="1" type="primary">mutS2</name>
    <name evidence="1" type="synonym">rqcU</name>
    <name type="ordered locus">STH1115</name>
</gene>
<proteinExistence type="inferred from homology"/>
<organism>
    <name type="scientific">Symbiobacterium thermophilum (strain DSM 24528 / JCM 14929 / IAM 14863 / T)</name>
    <dbReference type="NCBI Taxonomy" id="292459"/>
    <lineage>
        <taxon>Bacteria</taxon>
        <taxon>Bacillati</taxon>
        <taxon>Bacillota</taxon>
        <taxon>Clostridia</taxon>
        <taxon>Eubacteriales</taxon>
        <taxon>Symbiobacteriaceae</taxon>
        <taxon>Symbiobacterium</taxon>
    </lineage>
</organism>
<accession>Q67QE3</accession>
<keyword id="KW-0067">ATP-binding</keyword>
<keyword id="KW-0238">DNA-binding</keyword>
<keyword id="KW-0255">Endonuclease</keyword>
<keyword id="KW-0378">Hydrolase</keyword>
<keyword id="KW-0540">Nuclease</keyword>
<keyword id="KW-0547">Nucleotide-binding</keyword>
<keyword id="KW-1185">Reference proteome</keyword>
<keyword id="KW-0694">RNA-binding</keyword>
<keyword id="KW-0699">rRNA-binding</keyword>
<evidence type="ECO:0000255" key="1">
    <source>
        <dbReference type="HAMAP-Rule" id="MF_00092"/>
    </source>
</evidence>
<evidence type="ECO:0000256" key="2">
    <source>
        <dbReference type="SAM" id="MobiDB-lite"/>
    </source>
</evidence>
<dbReference type="EC" id="3.1.-.-" evidence="1"/>
<dbReference type="EC" id="3.6.4.-" evidence="1"/>
<dbReference type="EMBL" id="AP006840">
    <property type="protein sequence ID" value="BAD40100.1"/>
    <property type="molecule type" value="Genomic_DNA"/>
</dbReference>
<dbReference type="RefSeq" id="WP_011195247.1">
    <property type="nucleotide sequence ID" value="NC_006177.1"/>
</dbReference>
<dbReference type="SMR" id="Q67QE3"/>
<dbReference type="STRING" id="292459.STH1115"/>
<dbReference type="KEGG" id="sth:STH1115"/>
<dbReference type="eggNOG" id="COG1193">
    <property type="taxonomic scope" value="Bacteria"/>
</dbReference>
<dbReference type="HOGENOM" id="CLU_011252_2_1_9"/>
<dbReference type="OrthoDB" id="9808166at2"/>
<dbReference type="Proteomes" id="UP000000417">
    <property type="component" value="Chromosome"/>
</dbReference>
<dbReference type="GO" id="GO:0005524">
    <property type="term" value="F:ATP binding"/>
    <property type="evidence" value="ECO:0007669"/>
    <property type="project" value="UniProtKB-UniRule"/>
</dbReference>
<dbReference type="GO" id="GO:0016887">
    <property type="term" value="F:ATP hydrolysis activity"/>
    <property type="evidence" value="ECO:0007669"/>
    <property type="project" value="InterPro"/>
</dbReference>
<dbReference type="GO" id="GO:0140664">
    <property type="term" value="F:ATP-dependent DNA damage sensor activity"/>
    <property type="evidence" value="ECO:0007669"/>
    <property type="project" value="InterPro"/>
</dbReference>
<dbReference type="GO" id="GO:0004519">
    <property type="term" value="F:endonuclease activity"/>
    <property type="evidence" value="ECO:0007669"/>
    <property type="project" value="UniProtKB-UniRule"/>
</dbReference>
<dbReference type="GO" id="GO:0030983">
    <property type="term" value="F:mismatched DNA binding"/>
    <property type="evidence" value="ECO:0007669"/>
    <property type="project" value="InterPro"/>
</dbReference>
<dbReference type="GO" id="GO:0043023">
    <property type="term" value="F:ribosomal large subunit binding"/>
    <property type="evidence" value="ECO:0007669"/>
    <property type="project" value="UniProtKB-UniRule"/>
</dbReference>
<dbReference type="GO" id="GO:0019843">
    <property type="term" value="F:rRNA binding"/>
    <property type="evidence" value="ECO:0007669"/>
    <property type="project" value="UniProtKB-UniRule"/>
</dbReference>
<dbReference type="GO" id="GO:0006298">
    <property type="term" value="P:mismatch repair"/>
    <property type="evidence" value="ECO:0007669"/>
    <property type="project" value="InterPro"/>
</dbReference>
<dbReference type="GO" id="GO:0045910">
    <property type="term" value="P:negative regulation of DNA recombination"/>
    <property type="evidence" value="ECO:0007669"/>
    <property type="project" value="InterPro"/>
</dbReference>
<dbReference type="GO" id="GO:0072344">
    <property type="term" value="P:rescue of stalled ribosome"/>
    <property type="evidence" value="ECO:0007669"/>
    <property type="project" value="UniProtKB-UniRule"/>
</dbReference>
<dbReference type="CDD" id="cd03280">
    <property type="entry name" value="ABC_MutS2"/>
    <property type="match status" value="1"/>
</dbReference>
<dbReference type="CDD" id="cd06503">
    <property type="entry name" value="ATP-synt_Fo_b"/>
    <property type="match status" value="1"/>
</dbReference>
<dbReference type="FunFam" id="3.40.50.300:FF:000830">
    <property type="entry name" value="Endonuclease MutS2"/>
    <property type="match status" value="1"/>
</dbReference>
<dbReference type="Gene3D" id="3.30.1370.110">
    <property type="match status" value="1"/>
</dbReference>
<dbReference type="Gene3D" id="3.40.50.300">
    <property type="entry name" value="P-loop containing nucleotide triphosphate hydrolases"/>
    <property type="match status" value="1"/>
</dbReference>
<dbReference type="HAMAP" id="MF_00092">
    <property type="entry name" value="MutS2"/>
    <property type="match status" value="1"/>
</dbReference>
<dbReference type="InterPro" id="IPR000432">
    <property type="entry name" value="DNA_mismatch_repair_MutS_C"/>
</dbReference>
<dbReference type="InterPro" id="IPR007696">
    <property type="entry name" value="DNA_mismatch_repair_MutS_core"/>
</dbReference>
<dbReference type="InterPro" id="IPR036187">
    <property type="entry name" value="DNA_mismatch_repair_MutS_sf"/>
</dbReference>
<dbReference type="InterPro" id="IPR046893">
    <property type="entry name" value="MSSS"/>
</dbReference>
<dbReference type="InterPro" id="IPR045076">
    <property type="entry name" value="MutS"/>
</dbReference>
<dbReference type="InterPro" id="IPR005747">
    <property type="entry name" value="MutS2"/>
</dbReference>
<dbReference type="InterPro" id="IPR027417">
    <property type="entry name" value="P-loop_NTPase"/>
</dbReference>
<dbReference type="InterPro" id="IPR002625">
    <property type="entry name" value="Smr_dom"/>
</dbReference>
<dbReference type="InterPro" id="IPR036063">
    <property type="entry name" value="Smr_dom_sf"/>
</dbReference>
<dbReference type="NCBIfam" id="TIGR01069">
    <property type="entry name" value="mutS2"/>
    <property type="match status" value="1"/>
</dbReference>
<dbReference type="PANTHER" id="PTHR48466:SF2">
    <property type="entry name" value="OS10G0509000 PROTEIN"/>
    <property type="match status" value="1"/>
</dbReference>
<dbReference type="PANTHER" id="PTHR48466">
    <property type="entry name" value="OS10G0509000 PROTEIN-RELATED"/>
    <property type="match status" value="1"/>
</dbReference>
<dbReference type="Pfam" id="PF20297">
    <property type="entry name" value="MSSS"/>
    <property type="match status" value="1"/>
</dbReference>
<dbReference type="Pfam" id="PF00488">
    <property type="entry name" value="MutS_V"/>
    <property type="match status" value="1"/>
</dbReference>
<dbReference type="Pfam" id="PF01713">
    <property type="entry name" value="Smr"/>
    <property type="match status" value="1"/>
</dbReference>
<dbReference type="PIRSF" id="PIRSF005814">
    <property type="entry name" value="MutS_YshD"/>
    <property type="match status" value="1"/>
</dbReference>
<dbReference type="SMART" id="SM00534">
    <property type="entry name" value="MUTSac"/>
    <property type="match status" value="1"/>
</dbReference>
<dbReference type="SMART" id="SM00533">
    <property type="entry name" value="MUTSd"/>
    <property type="match status" value="1"/>
</dbReference>
<dbReference type="SMART" id="SM00463">
    <property type="entry name" value="SMR"/>
    <property type="match status" value="1"/>
</dbReference>
<dbReference type="SUPFAM" id="SSF48334">
    <property type="entry name" value="DNA repair protein MutS, domain III"/>
    <property type="match status" value="1"/>
</dbReference>
<dbReference type="SUPFAM" id="SSF52540">
    <property type="entry name" value="P-loop containing nucleoside triphosphate hydrolases"/>
    <property type="match status" value="1"/>
</dbReference>
<dbReference type="SUPFAM" id="SSF160443">
    <property type="entry name" value="SMR domain-like"/>
    <property type="match status" value="1"/>
</dbReference>
<dbReference type="PROSITE" id="PS00486">
    <property type="entry name" value="DNA_MISMATCH_REPAIR_2"/>
    <property type="match status" value="1"/>
</dbReference>
<dbReference type="PROSITE" id="PS50828">
    <property type="entry name" value="SMR"/>
    <property type="match status" value="1"/>
</dbReference>
<protein>
    <recommendedName>
        <fullName evidence="1">Endonuclease MutS2</fullName>
        <ecNumber evidence="1">3.1.-.-</ecNumber>
    </recommendedName>
    <alternativeName>
        <fullName evidence="1">Ribosome-associated protein quality control-upstream factor</fullName>
        <shortName evidence="1">RQC-upstream factor</shortName>
        <shortName evidence="1">RqcU</shortName>
        <ecNumber evidence="1">3.6.4.-</ecNumber>
    </alternativeName>
</protein>
<sequence length="793" mass="87439">MDERTLRTLEFAKIKEMLAERTATSLGREVVESLAPATDFLEVQHRQAETSEARRLYEGGHAIPLGGLHDLRAHVQRAVRGGVLDPGDLLDVADTAASSRRLKRFLEEQEGLPILTALSRMLGTFHHLEAEIRQAVDEHGEVRDDASPALAEIRRSMRILQNRMKERLDAFVRGSAAKYLQDPIVTIREGRFVVPVKIEYRAQVPGIVHDQSASGSTLFIEPMAIVEMNNDLRELALKEHEEVERILARLSSLVAGEADALLDTLQAVAQIDFASAKGKLSLDLDCTEPELVREPILEIHKGRHPLLKGRVVPIDVHIGITFDTLVITGPNTGGKTVALKTMGLFVLMAQAGLHLPAGHGTRVGVFQQVFVDIGDEQSIEQSLSTFSGHMTNIIRILDALEGPALVLLDELGAGTDPTEGAALAMSILEHLHKRGAKTVATTHYSELKTYAYTRSRVENASVEFDVETLRPTFRLLIGVPGSSNAFEISRRLGLSPHIVDRARQFLTQEQERVEDLIQGIHATRAELEKERAEAHRLRAEAQRMREEYERRYGDAQRKAAETVEKARAQAQQILATARREAEAVIAELKQALREQREAERMQAIQSARSRLARARQAVEPTEEEQRARRRGEVPRGLKPGDKVRVVSLDTTGYVLSEPDADGNVLVQAGILKMTVSLTDLERASEEQPAAGAGGPARMRTHGKGLAVSKAREMSPEVDLRGLMVEEALERVDKFLDDAVLAGLPQVRIIHGKGTGALRKAVTEALRHDRRVESYRLGGVGEGGDGVTVAKLRE</sequence>
<feature type="chain" id="PRO_1000093409" description="Endonuclease MutS2">
    <location>
        <begin position="1"/>
        <end position="793"/>
    </location>
</feature>
<feature type="domain" description="Smr" evidence="1">
    <location>
        <begin position="717"/>
        <end position="792"/>
    </location>
</feature>
<feature type="region of interest" description="Disordered" evidence="2">
    <location>
        <begin position="611"/>
        <end position="639"/>
    </location>
</feature>
<feature type="compositionally biased region" description="Basic and acidic residues" evidence="2">
    <location>
        <begin position="623"/>
        <end position="639"/>
    </location>
</feature>
<feature type="binding site" evidence="1">
    <location>
        <begin position="329"/>
        <end position="336"/>
    </location>
    <ligand>
        <name>ATP</name>
        <dbReference type="ChEBI" id="CHEBI:30616"/>
    </ligand>
</feature>